<organism>
    <name type="scientific">Methylobacterium nodulans (strain LMG 21967 / CNCM I-2342 / ORS 2060)</name>
    <dbReference type="NCBI Taxonomy" id="460265"/>
    <lineage>
        <taxon>Bacteria</taxon>
        <taxon>Pseudomonadati</taxon>
        <taxon>Pseudomonadota</taxon>
        <taxon>Alphaproteobacteria</taxon>
        <taxon>Hyphomicrobiales</taxon>
        <taxon>Methylobacteriaceae</taxon>
        <taxon>Methylobacterium</taxon>
    </lineage>
</organism>
<keyword id="KW-0067">ATP-binding</keyword>
<keyword id="KW-0143">Chaperone</keyword>
<keyword id="KW-0963">Cytoplasm</keyword>
<keyword id="KW-0547">Nucleotide-binding</keyword>
<keyword id="KW-1185">Reference proteome</keyword>
<keyword id="KW-0346">Stress response</keyword>
<accession>B8IMW6</accession>
<protein>
    <recommendedName>
        <fullName evidence="1">ATP-dependent protease ATPase subunit HslU</fullName>
    </recommendedName>
    <alternativeName>
        <fullName evidence="1">Unfoldase HslU</fullName>
    </alternativeName>
</protein>
<sequence>MTTFSPREIVSELDRYIVGQADAKRAVAIALRNRWRRQQLQGPLREEVAPKNILMIGPTGCGKTEISRRLARLANAPFLKVEATKFTEVGYVGRDVEQIVRDLVEVGIGLKRDEKRRSVQAKAEAAAEARILDALVGPTASQATRDSFRRRLRAGELDDKEVELELAGSATAGLPMFEIPGMPGAAMGAINLGDMLGKALGGQRGRPRRITVRDAHAPLMTEESDKLLDQDTIIQEAIREVEDNGIVFLDEVDKICAREGRGGADVSREGVQRDLLPLIEGTTVATKYGPVKTDHILFIASGAFHVSKPSDLLPELQGRLPIRVELAPLTVDDFRRILTETEASLLKQAVALMATEGVTVTFTDDAVDALARVAVDVNSSVENIGARRLQTVLERVLDEISFAAPDRSGEIVTIDAAYVRERVESLAQNADLSRFIL</sequence>
<dbReference type="EMBL" id="CP001349">
    <property type="protein sequence ID" value="ACL60309.1"/>
    <property type="molecule type" value="Genomic_DNA"/>
</dbReference>
<dbReference type="RefSeq" id="WP_015931916.1">
    <property type="nucleotide sequence ID" value="NC_011894.1"/>
</dbReference>
<dbReference type="SMR" id="B8IMW6"/>
<dbReference type="STRING" id="460265.Mnod_5465"/>
<dbReference type="KEGG" id="mno:Mnod_5465"/>
<dbReference type="eggNOG" id="COG1220">
    <property type="taxonomic scope" value="Bacteria"/>
</dbReference>
<dbReference type="HOGENOM" id="CLU_033123_0_0_5"/>
<dbReference type="OrthoDB" id="9804062at2"/>
<dbReference type="Proteomes" id="UP000008207">
    <property type="component" value="Chromosome"/>
</dbReference>
<dbReference type="GO" id="GO:0009376">
    <property type="term" value="C:HslUV protease complex"/>
    <property type="evidence" value="ECO:0007669"/>
    <property type="project" value="UniProtKB-UniRule"/>
</dbReference>
<dbReference type="GO" id="GO:0005524">
    <property type="term" value="F:ATP binding"/>
    <property type="evidence" value="ECO:0007669"/>
    <property type="project" value="UniProtKB-UniRule"/>
</dbReference>
<dbReference type="GO" id="GO:0016887">
    <property type="term" value="F:ATP hydrolysis activity"/>
    <property type="evidence" value="ECO:0007669"/>
    <property type="project" value="InterPro"/>
</dbReference>
<dbReference type="GO" id="GO:0008233">
    <property type="term" value="F:peptidase activity"/>
    <property type="evidence" value="ECO:0007669"/>
    <property type="project" value="InterPro"/>
</dbReference>
<dbReference type="GO" id="GO:0036402">
    <property type="term" value="F:proteasome-activating activity"/>
    <property type="evidence" value="ECO:0007669"/>
    <property type="project" value="UniProtKB-UniRule"/>
</dbReference>
<dbReference type="GO" id="GO:0043335">
    <property type="term" value="P:protein unfolding"/>
    <property type="evidence" value="ECO:0007669"/>
    <property type="project" value="UniProtKB-UniRule"/>
</dbReference>
<dbReference type="GO" id="GO:0051603">
    <property type="term" value="P:proteolysis involved in protein catabolic process"/>
    <property type="evidence" value="ECO:0007669"/>
    <property type="project" value="TreeGrafter"/>
</dbReference>
<dbReference type="CDD" id="cd19498">
    <property type="entry name" value="RecA-like_HslU"/>
    <property type="match status" value="1"/>
</dbReference>
<dbReference type="FunFam" id="3.40.50.300:FF:000213">
    <property type="entry name" value="ATP-dependent protease ATPase subunit HslU"/>
    <property type="match status" value="1"/>
</dbReference>
<dbReference type="FunFam" id="3.40.50.300:FF:000220">
    <property type="entry name" value="ATP-dependent protease ATPase subunit HslU"/>
    <property type="match status" value="1"/>
</dbReference>
<dbReference type="Gene3D" id="1.10.8.60">
    <property type="match status" value="1"/>
</dbReference>
<dbReference type="Gene3D" id="1.10.8.10">
    <property type="entry name" value="DNA helicase RuvA subunit, C-terminal domain"/>
    <property type="match status" value="1"/>
</dbReference>
<dbReference type="Gene3D" id="3.40.50.300">
    <property type="entry name" value="P-loop containing nucleotide triphosphate hydrolases"/>
    <property type="match status" value="1"/>
</dbReference>
<dbReference type="HAMAP" id="MF_00249">
    <property type="entry name" value="HslU"/>
    <property type="match status" value="1"/>
</dbReference>
<dbReference type="InterPro" id="IPR003593">
    <property type="entry name" value="AAA+_ATPase"/>
</dbReference>
<dbReference type="InterPro" id="IPR050052">
    <property type="entry name" value="ATP-dep_Clp_protease_ClpX"/>
</dbReference>
<dbReference type="InterPro" id="IPR003959">
    <property type="entry name" value="ATPase_AAA_core"/>
</dbReference>
<dbReference type="InterPro" id="IPR011704">
    <property type="entry name" value="ATPase_dyneun-rel_AAA"/>
</dbReference>
<dbReference type="InterPro" id="IPR019489">
    <property type="entry name" value="Clp_ATPase_C"/>
</dbReference>
<dbReference type="InterPro" id="IPR004491">
    <property type="entry name" value="HslU"/>
</dbReference>
<dbReference type="InterPro" id="IPR027417">
    <property type="entry name" value="P-loop_NTPase"/>
</dbReference>
<dbReference type="NCBIfam" id="TIGR00390">
    <property type="entry name" value="hslU"/>
    <property type="match status" value="1"/>
</dbReference>
<dbReference type="NCBIfam" id="NF003544">
    <property type="entry name" value="PRK05201.1"/>
    <property type="match status" value="1"/>
</dbReference>
<dbReference type="PANTHER" id="PTHR48102">
    <property type="entry name" value="ATP-DEPENDENT CLP PROTEASE ATP-BINDING SUBUNIT CLPX-LIKE, MITOCHONDRIAL-RELATED"/>
    <property type="match status" value="1"/>
</dbReference>
<dbReference type="PANTHER" id="PTHR48102:SF3">
    <property type="entry name" value="ATP-DEPENDENT PROTEASE ATPASE SUBUNIT HSLU"/>
    <property type="match status" value="1"/>
</dbReference>
<dbReference type="Pfam" id="PF07724">
    <property type="entry name" value="AAA_2"/>
    <property type="match status" value="1"/>
</dbReference>
<dbReference type="Pfam" id="PF07728">
    <property type="entry name" value="AAA_5"/>
    <property type="match status" value="1"/>
</dbReference>
<dbReference type="SMART" id="SM00382">
    <property type="entry name" value="AAA"/>
    <property type="match status" value="1"/>
</dbReference>
<dbReference type="SMART" id="SM01086">
    <property type="entry name" value="ClpB_D2-small"/>
    <property type="match status" value="1"/>
</dbReference>
<dbReference type="SUPFAM" id="SSF52540">
    <property type="entry name" value="P-loop containing nucleoside triphosphate hydrolases"/>
    <property type="match status" value="1"/>
</dbReference>
<evidence type="ECO:0000255" key="1">
    <source>
        <dbReference type="HAMAP-Rule" id="MF_00249"/>
    </source>
</evidence>
<name>HSLU_METNO</name>
<proteinExistence type="inferred from homology"/>
<reference key="1">
    <citation type="submission" date="2009-01" db="EMBL/GenBank/DDBJ databases">
        <title>Complete sequence of chromosome of Methylobacterium nodulans ORS 2060.</title>
        <authorList>
            <consortium name="US DOE Joint Genome Institute"/>
            <person name="Lucas S."/>
            <person name="Copeland A."/>
            <person name="Lapidus A."/>
            <person name="Glavina del Rio T."/>
            <person name="Dalin E."/>
            <person name="Tice H."/>
            <person name="Bruce D."/>
            <person name="Goodwin L."/>
            <person name="Pitluck S."/>
            <person name="Sims D."/>
            <person name="Brettin T."/>
            <person name="Detter J.C."/>
            <person name="Han C."/>
            <person name="Larimer F."/>
            <person name="Land M."/>
            <person name="Hauser L."/>
            <person name="Kyrpides N."/>
            <person name="Ivanova N."/>
            <person name="Marx C.J."/>
            <person name="Richardson P."/>
        </authorList>
    </citation>
    <scope>NUCLEOTIDE SEQUENCE [LARGE SCALE GENOMIC DNA]</scope>
    <source>
        <strain>LMG 21967 / CNCM I-2342 / ORS 2060</strain>
    </source>
</reference>
<gene>
    <name evidence="1" type="primary">hslU</name>
    <name type="ordered locus">Mnod_5465</name>
</gene>
<comment type="function">
    <text evidence="1">ATPase subunit of a proteasome-like degradation complex; this subunit has chaperone activity. The binding of ATP and its subsequent hydrolysis by HslU are essential for unfolding of protein substrates subsequently hydrolyzed by HslV. HslU recognizes the N-terminal part of its protein substrates and unfolds these before they are guided to HslV for hydrolysis.</text>
</comment>
<comment type="subunit">
    <text evidence="1">A double ring-shaped homohexamer of HslV is capped on each side by a ring-shaped HslU homohexamer. The assembly of the HslU/HslV complex is dependent on binding of ATP.</text>
</comment>
<comment type="subcellular location">
    <subcellularLocation>
        <location evidence="1">Cytoplasm</location>
    </subcellularLocation>
</comment>
<comment type="similarity">
    <text evidence="1">Belongs to the ClpX chaperone family. HslU subfamily.</text>
</comment>
<feature type="chain" id="PRO_1000125443" description="ATP-dependent protease ATPase subunit HslU">
    <location>
        <begin position="1"/>
        <end position="437"/>
    </location>
</feature>
<feature type="binding site" evidence="1">
    <location>
        <position position="18"/>
    </location>
    <ligand>
        <name>ATP</name>
        <dbReference type="ChEBI" id="CHEBI:30616"/>
    </ligand>
</feature>
<feature type="binding site" evidence="1">
    <location>
        <begin position="60"/>
        <end position="65"/>
    </location>
    <ligand>
        <name>ATP</name>
        <dbReference type="ChEBI" id="CHEBI:30616"/>
    </ligand>
</feature>
<feature type="binding site" evidence="1">
    <location>
        <position position="250"/>
    </location>
    <ligand>
        <name>ATP</name>
        <dbReference type="ChEBI" id="CHEBI:30616"/>
    </ligand>
</feature>
<feature type="binding site" evidence="1">
    <location>
        <position position="315"/>
    </location>
    <ligand>
        <name>ATP</name>
        <dbReference type="ChEBI" id="CHEBI:30616"/>
    </ligand>
</feature>
<feature type="binding site" evidence="1">
    <location>
        <position position="387"/>
    </location>
    <ligand>
        <name>ATP</name>
        <dbReference type="ChEBI" id="CHEBI:30616"/>
    </ligand>
</feature>